<keyword id="KW-0004">4Fe-4S</keyword>
<keyword id="KW-0963">Cytoplasm</keyword>
<keyword id="KW-1015">Disulfide bond</keyword>
<keyword id="KW-0408">Iron</keyword>
<keyword id="KW-0411">Iron-sulfur</keyword>
<keyword id="KW-0479">Metal-binding</keyword>
<keyword id="KW-0489">Methyltransferase</keyword>
<keyword id="KW-0698">rRNA processing</keyword>
<keyword id="KW-0949">S-adenosyl-L-methionine</keyword>
<keyword id="KW-0808">Transferase</keyword>
<keyword id="KW-0819">tRNA processing</keyword>
<sequence length="390" mass="43553">MCNNEAKMSELLSVQSDAPAKKINLMDLTRQQMREFFKELGEKPFRADQLVKWIYHFGEDNFDNMTNINKKLREKLKAVAEIKAPEVAVEQRSADGTIKWAMQVGEQQVETVYIPEADRATLCVSSQVGCALACTFCSTAQQGFNRNLTVSEIIGQVWRASKIIGNFGVTGVRPITNVVMMGMGEPLLNVANVVPAMEIMLDDFAYGLSKRRVTLSTSGVVPALDNLSKMIDVALAISLHAPNDELRDEIVPINKKYNIKTLIDSVNRYLNVSNANHGKVTIEYVMLDHVNDGIEHAHQLAEVLKNTPCKINLIPWNPFPEAPYAKSSNTRIDRFQKTLMEYGFTVIIRKTRGDDIDAACGQLAGDVIDRTKRTAMKRQFGQNIGVTEVN</sequence>
<proteinExistence type="inferred from homology"/>
<accession>Q4QNH7</accession>
<name>RLMN_HAEI8</name>
<protein>
    <recommendedName>
        <fullName evidence="1">Dual-specificity RNA methyltransferase RlmN</fullName>
        <ecNumber evidence="1">2.1.1.192</ecNumber>
    </recommendedName>
    <alternativeName>
        <fullName evidence="1">23S rRNA (adenine(2503)-C(2))-methyltransferase</fullName>
    </alternativeName>
    <alternativeName>
        <fullName evidence="1">23S rRNA m2A2503 methyltransferase</fullName>
    </alternativeName>
    <alternativeName>
        <fullName evidence="1">Ribosomal RNA large subunit methyltransferase N</fullName>
    </alternativeName>
    <alternativeName>
        <fullName evidence="1">tRNA (adenine(37)-C(2))-methyltransferase</fullName>
    </alternativeName>
    <alternativeName>
        <fullName evidence="1">tRNA m2A37 methyltransferase</fullName>
    </alternativeName>
</protein>
<gene>
    <name evidence="1" type="primary">rlmN</name>
    <name type="ordered locus">NTHI0485</name>
</gene>
<organism>
    <name type="scientific">Haemophilus influenzae (strain 86-028NP)</name>
    <dbReference type="NCBI Taxonomy" id="281310"/>
    <lineage>
        <taxon>Bacteria</taxon>
        <taxon>Pseudomonadati</taxon>
        <taxon>Pseudomonadota</taxon>
        <taxon>Gammaproteobacteria</taxon>
        <taxon>Pasteurellales</taxon>
        <taxon>Pasteurellaceae</taxon>
        <taxon>Haemophilus</taxon>
    </lineage>
</organism>
<dbReference type="EC" id="2.1.1.192" evidence="1"/>
<dbReference type="EMBL" id="CP000057">
    <property type="protein sequence ID" value="AAX87420.1"/>
    <property type="molecule type" value="Genomic_DNA"/>
</dbReference>
<dbReference type="SMR" id="Q4QNH7"/>
<dbReference type="KEGG" id="hit:NTHI0485"/>
<dbReference type="HOGENOM" id="CLU_029101_0_0_6"/>
<dbReference type="Proteomes" id="UP000002525">
    <property type="component" value="Chromosome"/>
</dbReference>
<dbReference type="GO" id="GO:0005737">
    <property type="term" value="C:cytoplasm"/>
    <property type="evidence" value="ECO:0007669"/>
    <property type="project" value="UniProtKB-SubCell"/>
</dbReference>
<dbReference type="GO" id="GO:0051539">
    <property type="term" value="F:4 iron, 4 sulfur cluster binding"/>
    <property type="evidence" value="ECO:0007669"/>
    <property type="project" value="UniProtKB-UniRule"/>
</dbReference>
<dbReference type="GO" id="GO:0046872">
    <property type="term" value="F:metal ion binding"/>
    <property type="evidence" value="ECO:0007669"/>
    <property type="project" value="UniProtKB-KW"/>
</dbReference>
<dbReference type="GO" id="GO:0070040">
    <property type="term" value="F:rRNA (adenine(2503)-C2-)-methyltransferase activity"/>
    <property type="evidence" value="ECO:0007669"/>
    <property type="project" value="UniProtKB-UniRule"/>
</dbReference>
<dbReference type="GO" id="GO:0019843">
    <property type="term" value="F:rRNA binding"/>
    <property type="evidence" value="ECO:0007669"/>
    <property type="project" value="UniProtKB-UniRule"/>
</dbReference>
<dbReference type="GO" id="GO:0002935">
    <property type="term" value="F:tRNA (adenine(37)-C2)-methyltransferase activity"/>
    <property type="evidence" value="ECO:0007669"/>
    <property type="project" value="UniProtKB-UniRule"/>
</dbReference>
<dbReference type="GO" id="GO:0000049">
    <property type="term" value="F:tRNA binding"/>
    <property type="evidence" value="ECO:0007669"/>
    <property type="project" value="UniProtKB-UniRule"/>
</dbReference>
<dbReference type="GO" id="GO:0070475">
    <property type="term" value="P:rRNA base methylation"/>
    <property type="evidence" value="ECO:0007669"/>
    <property type="project" value="UniProtKB-UniRule"/>
</dbReference>
<dbReference type="GO" id="GO:0030488">
    <property type="term" value="P:tRNA methylation"/>
    <property type="evidence" value="ECO:0007669"/>
    <property type="project" value="UniProtKB-UniRule"/>
</dbReference>
<dbReference type="CDD" id="cd01335">
    <property type="entry name" value="Radical_SAM"/>
    <property type="match status" value="1"/>
</dbReference>
<dbReference type="FunFam" id="1.10.150.530:FF:000003">
    <property type="entry name" value="Dual-specificity RNA methyltransferase RlmN"/>
    <property type="match status" value="1"/>
</dbReference>
<dbReference type="FunFam" id="3.20.20.70:FF:000008">
    <property type="entry name" value="Dual-specificity RNA methyltransferase RlmN"/>
    <property type="match status" value="1"/>
</dbReference>
<dbReference type="Gene3D" id="1.10.150.530">
    <property type="match status" value="1"/>
</dbReference>
<dbReference type="Gene3D" id="3.20.20.70">
    <property type="entry name" value="Aldolase class I"/>
    <property type="match status" value="1"/>
</dbReference>
<dbReference type="HAMAP" id="MF_01849">
    <property type="entry name" value="RNA_methyltr_RlmN"/>
    <property type="match status" value="1"/>
</dbReference>
<dbReference type="InterPro" id="IPR013785">
    <property type="entry name" value="Aldolase_TIM"/>
</dbReference>
<dbReference type="InterPro" id="IPR040072">
    <property type="entry name" value="Methyltransferase_A"/>
</dbReference>
<dbReference type="InterPro" id="IPR048641">
    <property type="entry name" value="RlmN_N"/>
</dbReference>
<dbReference type="InterPro" id="IPR027492">
    <property type="entry name" value="RNA_MTrfase_RlmN"/>
</dbReference>
<dbReference type="InterPro" id="IPR004383">
    <property type="entry name" value="rRNA_lsu_MTrfase_RlmN/Cfr"/>
</dbReference>
<dbReference type="InterPro" id="IPR007197">
    <property type="entry name" value="rSAM"/>
</dbReference>
<dbReference type="NCBIfam" id="NF008396">
    <property type="entry name" value="PRK11194.1"/>
    <property type="match status" value="1"/>
</dbReference>
<dbReference type="NCBIfam" id="TIGR00048">
    <property type="entry name" value="rRNA_mod_RlmN"/>
    <property type="match status" value="1"/>
</dbReference>
<dbReference type="PANTHER" id="PTHR30544">
    <property type="entry name" value="23S RRNA METHYLTRANSFERASE"/>
    <property type="match status" value="1"/>
</dbReference>
<dbReference type="PANTHER" id="PTHR30544:SF5">
    <property type="entry name" value="RADICAL SAM CORE DOMAIN-CONTAINING PROTEIN"/>
    <property type="match status" value="1"/>
</dbReference>
<dbReference type="Pfam" id="PF04055">
    <property type="entry name" value="Radical_SAM"/>
    <property type="match status" value="1"/>
</dbReference>
<dbReference type="Pfam" id="PF21016">
    <property type="entry name" value="RlmN_N"/>
    <property type="match status" value="1"/>
</dbReference>
<dbReference type="PIRSF" id="PIRSF006004">
    <property type="entry name" value="CHP00048"/>
    <property type="match status" value="1"/>
</dbReference>
<dbReference type="SFLD" id="SFLDF00275">
    <property type="entry name" value="adenosine_C2_methyltransferase"/>
    <property type="match status" value="1"/>
</dbReference>
<dbReference type="SFLD" id="SFLDS00029">
    <property type="entry name" value="Radical_SAM"/>
    <property type="match status" value="1"/>
</dbReference>
<dbReference type="SUPFAM" id="SSF102114">
    <property type="entry name" value="Radical SAM enzymes"/>
    <property type="match status" value="1"/>
</dbReference>
<dbReference type="PROSITE" id="PS51918">
    <property type="entry name" value="RADICAL_SAM"/>
    <property type="match status" value="1"/>
</dbReference>
<evidence type="ECO:0000255" key="1">
    <source>
        <dbReference type="HAMAP-Rule" id="MF_01849"/>
    </source>
</evidence>
<evidence type="ECO:0000255" key="2">
    <source>
        <dbReference type="PROSITE-ProRule" id="PRU01266"/>
    </source>
</evidence>
<reference key="1">
    <citation type="journal article" date="2005" name="J. Bacteriol.">
        <title>Genomic sequence of an otitis media isolate of nontypeable Haemophilus influenzae: comparative study with H. influenzae serotype d, strain KW20.</title>
        <authorList>
            <person name="Harrison A."/>
            <person name="Dyer D.W."/>
            <person name="Gillaspy A."/>
            <person name="Ray W.C."/>
            <person name="Mungur R."/>
            <person name="Carson M.B."/>
            <person name="Zhong H."/>
            <person name="Gipson J."/>
            <person name="Gipson M."/>
            <person name="Johnson L.S."/>
            <person name="Lewis L."/>
            <person name="Bakaletz L.O."/>
            <person name="Munson R.S. Jr."/>
        </authorList>
    </citation>
    <scope>NUCLEOTIDE SEQUENCE [LARGE SCALE GENOMIC DNA]</scope>
    <source>
        <strain>86-028NP</strain>
    </source>
</reference>
<feature type="chain" id="PRO_0000350202" description="Dual-specificity RNA methyltransferase RlmN">
    <location>
        <begin position="1"/>
        <end position="390"/>
    </location>
</feature>
<feature type="domain" description="Radical SAM core" evidence="2">
    <location>
        <begin position="116"/>
        <end position="355"/>
    </location>
</feature>
<feature type="active site" description="Proton acceptor" evidence="1">
    <location>
        <position position="110"/>
    </location>
</feature>
<feature type="active site" description="S-methylcysteine intermediate" evidence="1">
    <location>
        <position position="360"/>
    </location>
</feature>
<feature type="binding site" evidence="1">
    <location>
        <position position="130"/>
    </location>
    <ligand>
        <name>[4Fe-4S] cluster</name>
        <dbReference type="ChEBI" id="CHEBI:49883"/>
        <note>4Fe-4S-S-AdoMet</note>
    </ligand>
</feature>
<feature type="binding site" evidence="1">
    <location>
        <position position="134"/>
    </location>
    <ligand>
        <name>[4Fe-4S] cluster</name>
        <dbReference type="ChEBI" id="CHEBI:49883"/>
        <note>4Fe-4S-S-AdoMet</note>
    </ligand>
</feature>
<feature type="binding site" evidence="1">
    <location>
        <position position="137"/>
    </location>
    <ligand>
        <name>[4Fe-4S] cluster</name>
        <dbReference type="ChEBI" id="CHEBI:49883"/>
        <note>4Fe-4S-S-AdoMet</note>
    </ligand>
</feature>
<feature type="binding site" evidence="1">
    <location>
        <begin position="184"/>
        <end position="185"/>
    </location>
    <ligand>
        <name>S-adenosyl-L-methionine</name>
        <dbReference type="ChEBI" id="CHEBI:59789"/>
    </ligand>
</feature>
<feature type="binding site" evidence="1">
    <location>
        <position position="216"/>
    </location>
    <ligand>
        <name>S-adenosyl-L-methionine</name>
        <dbReference type="ChEBI" id="CHEBI:59789"/>
    </ligand>
</feature>
<feature type="binding site" evidence="1">
    <location>
        <begin position="238"/>
        <end position="240"/>
    </location>
    <ligand>
        <name>S-adenosyl-L-methionine</name>
        <dbReference type="ChEBI" id="CHEBI:59789"/>
    </ligand>
</feature>
<feature type="binding site" evidence="1">
    <location>
        <position position="317"/>
    </location>
    <ligand>
        <name>S-adenosyl-L-methionine</name>
        <dbReference type="ChEBI" id="CHEBI:59789"/>
    </ligand>
</feature>
<feature type="disulfide bond" description="(transient)" evidence="1">
    <location>
        <begin position="123"/>
        <end position="360"/>
    </location>
</feature>
<comment type="function">
    <text evidence="1">Specifically methylates position 2 of adenine 2503 in 23S rRNA and position 2 of adenine 37 in tRNAs. m2A2503 modification seems to play a crucial role in the proofreading step occurring at the peptidyl transferase center and thus would serve to optimize ribosomal fidelity.</text>
</comment>
<comment type="catalytic activity">
    <reaction evidence="1">
        <text>adenosine(2503) in 23S rRNA + 2 reduced [2Fe-2S]-[ferredoxin] + 2 S-adenosyl-L-methionine = 2-methyladenosine(2503) in 23S rRNA + 5'-deoxyadenosine + L-methionine + 2 oxidized [2Fe-2S]-[ferredoxin] + S-adenosyl-L-homocysteine</text>
        <dbReference type="Rhea" id="RHEA:42916"/>
        <dbReference type="Rhea" id="RHEA-COMP:10000"/>
        <dbReference type="Rhea" id="RHEA-COMP:10001"/>
        <dbReference type="Rhea" id="RHEA-COMP:10152"/>
        <dbReference type="Rhea" id="RHEA-COMP:10282"/>
        <dbReference type="ChEBI" id="CHEBI:17319"/>
        <dbReference type="ChEBI" id="CHEBI:33737"/>
        <dbReference type="ChEBI" id="CHEBI:33738"/>
        <dbReference type="ChEBI" id="CHEBI:57844"/>
        <dbReference type="ChEBI" id="CHEBI:57856"/>
        <dbReference type="ChEBI" id="CHEBI:59789"/>
        <dbReference type="ChEBI" id="CHEBI:74411"/>
        <dbReference type="ChEBI" id="CHEBI:74497"/>
        <dbReference type="EC" id="2.1.1.192"/>
    </reaction>
</comment>
<comment type="catalytic activity">
    <reaction evidence="1">
        <text>adenosine(37) in tRNA + 2 reduced [2Fe-2S]-[ferredoxin] + 2 S-adenosyl-L-methionine = 2-methyladenosine(37) in tRNA + 5'-deoxyadenosine + L-methionine + 2 oxidized [2Fe-2S]-[ferredoxin] + S-adenosyl-L-homocysteine</text>
        <dbReference type="Rhea" id="RHEA:43332"/>
        <dbReference type="Rhea" id="RHEA-COMP:10000"/>
        <dbReference type="Rhea" id="RHEA-COMP:10001"/>
        <dbReference type="Rhea" id="RHEA-COMP:10162"/>
        <dbReference type="Rhea" id="RHEA-COMP:10485"/>
        <dbReference type="ChEBI" id="CHEBI:17319"/>
        <dbReference type="ChEBI" id="CHEBI:33737"/>
        <dbReference type="ChEBI" id="CHEBI:33738"/>
        <dbReference type="ChEBI" id="CHEBI:57844"/>
        <dbReference type="ChEBI" id="CHEBI:57856"/>
        <dbReference type="ChEBI" id="CHEBI:59789"/>
        <dbReference type="ChEBI" id="CHEBI:74411"/>
        <dbReference type="ChEBI" id="CHEBI:74497"/>
        <dbReference type="EC" id="2.1.1.192"/>
    </reaction>
</comment>
<comment type="cofactor">
    <cofactor evidence="1">
        <name>[4Fe-4S] cluster</name>
        <dbReference type="ChEBI" id="CHEBI:49883"/>
    </cofactor>
    <text evidence="1">Binds 1 [4Fe-4S] cluster. The cluster is coordinated with 3 cysteines and an exchangeable S-adenosyl-L-methionine.</text>
</comment>
<comment type="subcellular location">
    <subcellularLocation>
        <location evidence="1">Cytoplasm</location>
    </subcellularLocation>
</comment>
<comment type="miscellaneous">
    <text evidence="1">Reaction proceeds by a ping-pong mechanism involving intermediate methylation of a conserved cysteine residue.</text>
</comment>
<comment type="similarity">
    <text evidence="1">Belongs to the radical SAM superfamily. RlmN family.</text>
</comment>